<proteinExistence type="inferred from homology"/>
<keyword id="KW-0119">Carbohydrate metabolism</keyword>
<keyword id="KW-0963">Cytoplasm</keyword>
<keyword id="KW-0378">Hydrolase</keyword>
<keyword id="KW-0460">Magnesium</keyword>
<keyword id="KW-0479">Metal-binding</keyword>
<keyword id="KW-1185">Reference proteome</keyword>
<organism>
    <name type="scientific">Aeromonas hydrophila subsp. hydrophila (strain ATCC 7966 / DSM 30187 / BCRC 13018 / CCUG 14551 / JCM 1027 / KCTC 2358 / NCIMB 9240 / NCTC 8049)</name>
    <dbReference type="NCBI Taxonomy" id="380703"/>
    <lineage>
        <taxon>Bacteria</taxon>
        <taxon>Pseudomonadati</taxon>
        <taxon>Pseudomonadota</taxon>
        <taxon>Gammaproteobacteria</taxon>
        <taxon>Aeromonadales</taxon>
        <taxon>Aeromonadaceae</taxon>
        <taxon>Aeromonas</taxon>
    </lineage>
</organism>
<gene>
    <name evidence="1" type="primary">fbp</name>
    <name type="ordered locus">AHA_2002</name>
</gene>
<evidence type="ECO:0000255" key="1">
    <source>
        <dbReference type="HAMAP-Rule" id="MF_01855"/>
    </source>
</evidence>
<reference key="1">
    <citation type="journal article" date="2006" name="J. Bacteriol.">
        <title>Genome sequence of Aeromonas hydrophila ATCC 7966T: jack of all trades.</title>
        <authorList>
            <person name="Seshadri R."/>
            <person name="Joseph S.W."/>
            <person name="Chopra A.K."/>
            <person name="Sha J."/>
            <person name="Shaw J."/>
            <person name="Graf J."/>
            <person name="Haft D.H."/>
            <person name="Wu M."/>
            <person name="Ren Q."/>
            <person name="Rosovitz M.J."/>
            <person name="Madupu R."/>
            <person name="Tallon L."/>
            <person name="Kim M."/>
            <person name="Jin S."/>
            <person name="Vuong H."/>
            <person name="Stine O.C."/>
            <person name="Ali A."/>
            <person name="Horneman A.J."/>
            <person name="Heidelberg J.F."/>
        </authorList>
    </citation>
    <scope>NUCLEOTIDE SEQUENCE [LARGE SCALE GENOMIC DNA]</scope>
    <source>
        <strain>ATCC 7966 / DSM 30187 / BCRC 13018 / CCUG 14551 / JCM 1027 / KCTC 2358 / NCIMB 9240 / NCTC 8049</strain>
    </source>
</reference>
<comment type="catalytic activity">
    <reaction evidence="1">
        <text>beta-D-fructose 1,6-bisphosphate + H2O = beta-D-fructose 6-phosphate + phosphate</text>
        <dbReference type="Rhea" id="RHEA:11064"/>
        <dbReference type="ChEBI" id="CHEBI:15377"/>
        <dbReference type="ChEBI" id="CHEBI:32966"/>
        <dbReference type="ChEBI" id="CHEBI:43474"/>
        <dbReference type="ChEBI" id="CHEBI:57634"/>
        <dbReference type="EC" id="3.1.3.11"/>
    </reaction>
</comment>
<comment type="cofactor">
    <cofactor evidence="1">
        <name>Mg(2+)</name>
        <dbReference type="ChEBI" id="CHEBI:18420"/>
    </cofactor>
    <text evidence="1">Binds 2 magnesium ions per subunit.</text>
</comment>
<comment type="pathway">
    <text evidence="1">Carbohydrate biosynthesis; gluconeogenesis.</text>
</comment>
<comment type="subunit">
    <text evidence="1">Homotetramer.</text>
</comment>
<comment type="subcellular location">
    <subcellularLocation>
        <location evidence="1">Cytoplasm</location>
    </subcellularLocation>
</comment>
<comment type="similarity">
    <text evidence="1">Belongs to the FBPase class 1 family.</text>
</comment>
<feature type="chain" id="PRO_0000364456" description="Fructose-1,6-bisphosphatase class 1">
    <location>
        <begin position="1"/>
        <end position="344"/>
    </location>
</feature>
<feature type="binding site" evidence="1">
    <location>
        <position position="92"/>
    </location>
    <ligand>
        <name>Mg(2+)</name>
        <dbReference type="ChEBI" id="CHEBI:18420"/>
        <label>1</label>
    </ligand>
</feature>
<feature type="binding site" evidence="1">
    <location>
        <position position="115"/>
    </location>
    <ligand>
        <name>Mg(2+)</name>
        <dbReference type="ChEBI" id="CHEBI:18420"/>
        <label>1</label>
    </ligand>
</feature>
<feature type="binding site" evidence="1">
    <location>
        <position position="115"/>
    </location>
    <ligand>
        <name>Mg(2+)</name>
        <dbReference type="ChEBI" id="CHEBI:18420"/>
        <label>2</label>
    </ligand>
</feature>
<feature type="binding site" evidence="1">
    <location>
        <position position="117"/>
    </location>
    <ligand>
        <name>Mg(2+)</name>
        <dbReference type="ChEBI" id="CHEBI:18420"/>
        <label>1</label>
    </ligand>
</feature>
<feature type="binding site" evidence="1">
    <location>
        <begin position="118"/>
        <end position="121"/>
    </location>
    <ligand>
        <name>substrate</name>
    </ligand>
</feature>
<feature type="binding site" evidence="1">
    <location>
        <position position="118"/>
    </location>
    <ligand>
        <name>Mg(2+)</name>
        <dbReference type="ChEBI" id="CHEBI:18420"/>
        <label>2</label>
    </ligand>
</feature>
<feature type="binding site" evidence="1">
    <location>
        <position position="211"/>
    </location>
    <ligand>
        <name>substrate</name>
    </ligand>
</feature>
<feature type="binding site" evidence="1">
    <location>
        <position position="244"/>
    </location>
    <ligand>
        <name>substrate</name>
    </ligand>
</feature>
<feature type="binding site" evidence="1">
    <location>
        <position position="274"/>
    </location>
    <ligand>
        <name>substrate</name>
    </ligand>
</feature>
<feature type="binding site" evidence="1">
    <location>
        <position position="280"/>
    </location>
    <ligand>
        <name>Mg(2+)</name>
        <dbReference type="ChEBI" id="CHEBI:18420"/>
        <label>2</label>
    </ligand>
</feature>
<sequence>MRNMITMGEFIVKKQADYPTATGELTSLLSSIRLAAKVVNREINKAGLADIIGSMGAENVQGEVQQKLDVYANERFKAALEARGEVCGMASEEEEDFVSFDSELSRHSKYVVLIDPLDGSSNIDVNVSVGTIFSIYRRVSKPGAGVTLEDFLQPGNRQVAAGYVVYGSSTMLVYTTGFGVNGFTYDPSIGCFCLSHENIRIPEEGKIYSINEGNYIKFPDGVKKYLKYCQERDEATHRPYTSRYIGSLVSDFHRNLLKGGIYIYPSGTNSPNGKLRLLYECNPMAFLVEQAGGKASDGFGRIMDIQPTALHQRTPYFVGSTKMVDRAEAFMREFSSHEDPANQG</sequence>
<protein>
    <recommendedName>
        <fullName evidence="1">Fructose-1,6-bisphosphatase class 1</fullName>
        <shortName evidence="1">FBPase class 1</shortName>
        <ecNumber evidence="1">3.1.3.11</ecNumber>
    </recommendedName>
    <alternativeName>
        <fullName evidence="1">D-fructose-1,6-bisphosphate 1-phosphohydrolase class 1</fullName>
    </alternativeName>
</protein>
<accession>A0KJT2</accession>
<name>F16PA_AERHH</name>
<dbReference type="EC" id="3.1.3.11" evidence="1"/>
<dbReference type="EMBL" id="CP000462">
    <property type="protein sequence ID" value="ABK39489.1"/>
    <property type="molecule type" value="Genomic_DNA"/>
</dbReference>
<dbReference type="RefSeq" id="WP_011705872.1">
    <property type="nucleotide sequence ID" value="NC_008570.1"/>
</dbReference>
<dbReference type="RefSeq" id="YP_856533.1">
    <property type="nucleotide sequence ID" value="NC_008570.1"/>
</dbReference>
<dbReference type="SMR" id="A0KJT2"/>
<dbReference type="STRING" id="380703.AHA_2002"/>
<dbReference type="EnsemblBacteria" id="ABK39489">
    <property type="protein sequence ID" value="ABK39489"/>
    <property type="gene ID" value="AHA_2002"/>
</dbReference>
<dbReference type="GeneID" id="4489235"/>
<dbReference type="KEGG" id="aha:AHA_2002"/>
<dbReference type="PATRIC" id="fig|380703.7.peg.2022"/>
<dbReference type="eggNOG" id="COG0158">
    <property type="taxonomic scope" value="Bacteria"/>
</dbReference>
<dbReference type="HOGENOM" id="CLU_039977_2_2_6"/>
<dbReference type="OrthoDB" id="9806756at2"/>
<dbReference type="UniPathway" id="UPA00138"/>
<dbReference type="Proteomes" id="UP000000756">
    <property type="component" value="Chromosome"/>
</dbReference>
<dbReference type="GO" id="GO:0005829">
    <property type="term" value="C:cytosol"/>
    <property type="evidence" value="ECO:0007669"/>
    <property type="project" value="TreeGrafter"/>
</dbReference>
<dbReference type="GO" id="GO:0042132">
    <property type="term" value="F:fructose 1,6-bisphosphate 1-phosphatase activity"/>
    <property type="evidence" value="ECO:0007669"/>
    <property type="project" value="UniProtKB-UniRule"/>
</dbReference>
<dbReference type="GO" id="GO:0000287">
    <property type="term" value="F:magnesium ion binding"/>
    <property type="evidence" value="ECO:0007669"/>
    <property type="project" value="UniProtKB-UniRule"/>
</dbReference>
<dbReference type="GO" id="GO:0030388">
    <property type="term" value="P:fructose 1,6-bisphosphate metabolic process"/>
    <property type="evidence" value="ECO:0007669"/>
    <property type="project" value="TreeGrafter"/>
</dbReference>
<dbReference type="GO" id="GO:0006002">
    <property type="term" value="P:fructose 6-phosphate metabolic process"/>
    <property type="evidence" value="ECO:0007669"/>
    <property type="project" value="TreeGrafter"/>
</dbReference>
<dbReference type="GO" id="GO:0006000">
    <property type="term" value="P:fructose metabolic process"/>
    <property type="evidence" value="ECO:0007669"/>
    <property type="project" value="TreeGrafter"/>
</dbReference>
<dbReference type="GO" id="GO:0006094">
    <property type="term" value="P:gluconeogenesis"/>
    <property type="evidence" value="ECO:0007669"/>
    <property type="project" value="UniProtKB-UniRule"/>
</dbReference>
<dbReference type="GO" id="GO:0005986">
    <property type="term" value="P:sucrose biosynthetic process"/>
    <property type="evidence" value="ECO:0007669"/>
    <property type="project" value="TreeGrafter"/>
</dbReference>
<dbReference type="CDD" id="cd00354">
    <property type="entry name" value="FBPase"/>
    <property type="match status" value="1"/>
</dbReference>
<dbReference type="FunFam" id="3.30.540.10:FF:000002">
    <property type="entry name" value="Fructose-1,6-bisphosphatase class 1"/>
    <property type="match status" value="1"/>
</dbReference>
<dbReference type="FunFam" id="3.40.190.80:FF:000001">
    <property type="entry name" value="Fructose-1,6-bisphosphatase class 1"/>
    <property type="match status" value="1"/>
</dbReference>
<dbReference type="Gene3D" id="3.40.190.80">
    <property type="match status" value="1"/>
</dbReference>
<dbReference type="Gene3D" id="3.30.540.10">
    <property type="entry name" value="Fructose-1,6-Bisphosphatase, subunit A, domain 1"/>
    <property type="match status" value="1"/>
</dbReference>
<dbReference type="HAMAP" id="MF_01855">
    <property type="entry name" value="FBPase_class1"/>
    <property type="match status" value="1"/>
</dbReference>
<dbReference type="InterPro" id="IPR044015">
    <property type="entry name" value="FBPase_C_dom"/>
</dbReference>
<dbReference type="InterPro" id="IPR000146">
    <property type="entry name" value="FBPase_class-1"/>
</dbReference>
<dbReference type="InterPro" id="IPR033391">
    <property type="entry name" value="FBPase_N"/>
</dbReference>
<dbReference type="InterPro" id="IPR028343">
    <property type="entry name" value="FBPtase"/>
</dbReference>
<dbReference type="InterPro" id="IPR020548">
    <property type="entry name" value="Fructose_bisphosphatase_AS"/>
</dbReference>
<dbReference type="NCBIfam" id="NF006778">
    <property type="entry name" value="PRK09293.1-1"/>
    <property type="match status" value="1"/>
</dbReference>
<dbReference type="NCBIfam" id="NF006779">
    <property type="entry name" value="PRK09293.1-3"/>
    <property type="match status" value="1"/>
</dbReference>
<dbReference type="PANTHER" id="PTHR11556">
    <property type="entry name" value="FRUCTOSE-1,6-BISPHOSPHATASE-RELATED"/>
    <property type="match status" value="1"/>
</dbReference>
<dbReference type="PANTHER" id="PTHR11556:SF35">
    <property type="entry name" value="SEDOHEPTULOSE-1,7-BISPHOSPHATASE, CHLOROPLASTIC"/>
    <property type="match status" value="1"/>
</dbReference>
<dbReference type="Pfam" id="PF00316">
    <property type="entry name" value="FBPase"/>
    <property type="match status" value="1"/>
</dbReference>
<dbReference type="Pfam" id="PF18913">
    <property type="entry name" value="FBPase_C"/>
    <property type="match status" value="1"/>
</dbReference>
<dbReference type="PIRSF" id="PIRSF500210">
    <property type="entry name" value="FBPtase"/>
    <property type="match status" value="1"/>
</dbReference>
<dbReference type="PIRSF" id="PIRSF000904">
    <property type="entry name" value="FBPtase_SBPase"/>
    <property type="match status" value="1"/>
</dbReference>
<dbReference type="PRINTS" id="PR00115">
    <property type="entry name" value="F16BPHPHTASE"/>
</dbReference>
<dbReference type="SUPFAM" id="SSF56655">
    <property type="entry name" value="Carbohydrate phosphatase"/>
    <property type="match status" value="1"/>
</dbReference>
<dbReference type="PROSITE" id="PS00124">
    <property type="entry name" value="FBPASE"/>
    <property type="match status" value="1"/>
</dbReference>